<keyword id="KW-0496">Mitochondrion</keyword>
<keyword id="KW-1185">Reference proteome</keyword>
<keyword id="KW-0687">Ribonucleoprotein</keyword>
<keyword id="KW-0689">Ribosomal protein</keyword>
<keyword id="KW-0809">Transit peptide</keyword>
<feature type="transit peptide" description="Mitochondrion">
    <location>
        <begin position="1"/>
        <end position="26"/>
    </location>
</feature>
<feature type="chain" id="PRO_0000273236" description="Large ribosomal subunit protein mL41">
    <location>
        <begin position="27"/>
        <end position="166"/>
    </location>
</feature>
<name>RM41_DROPS</name>
<proteinExistence type="inferred from homology"/>
<comment type="subunit">
    <text evidence="1">Component of the mitochondrial ribosome large subunit (39S) which comprises a 16S rRNA and about 50 distinct proteins.</text>
</comment>
<comment type="subcellular location">
    <subcellularLocation>
        <location evidence="1">Mitochondrion</location>
    </subcellularLocation>
</comment>
<comment type="similarity">
    <text evidence="2">Belongs to the mitochondrion-specific ribosomal protein mL41 family.</text>
</comment>
<dbReference type="EMBL" id="CM000071">
    <property type="protein sequence ID" value="EAL25212.1"/>
    <property type="molecule type" value="Genomic_DNA"/>
</dbReference>
<dbReference type="RefSeq" id="XP_001360637.1">
    <property type="nucleotide sequence ID" value="XM_001360600.3"/>
</dbReference>
<dbReference type="SMR" id="Q291A0"/>
<dbReference type="FunCoup" id="Q291A0">
    <property type="interactions" value="41"/>
</dbReference>
<dbReference type="STRING" id="46245.Q291A0"/>
<dbReference type="EnsemblMetazoa" id="FBtr0279236">
    <property type="protein sequence ID" value="FBpp0277674"/>
    <property type="gene ID" value="FBgn0071986"/>
</dbReference>
<dbReference type="GeneID" id="4804006"/>
<dbReference type="KEGG" id="dpo:4804006"/>
<dbReference type="CTD" id="64975"/>
<dbReference type="eggNOG" id="KOG4756">
    <property type="taxonomic scope" value="Eukaryota"/>
</dbReference>
<dbReference type="HOGENOM" id="CLU_136410_0_0_1"/>
<dbReference type="InParanoid" id="Q291A0"/>
<dbReference type="OMA" id="CQQRTIS"/>
<dbReference type="PhylomeDB" id="Q291A0"/>
<dbReference type="Proteomes" id="UP000001819">
    <property type="component" value="Chromosome 3"/>
</dbReference>
<dbReference type="Bgee" id="FBgn0071986">
    <property type="expression patterns" value="Expressed in insect adult head and 2 other cell types or tissues"/>
</dbReference>
<dbReference type="GO" id="GO:0005762">
    <property type="term" value="C:mitochondrial large ribosomal subunit"/>
    <property type="evidence" value="ECO:0000250"/>
    <property type="project" value="UniProtKB"/>
</dbReference>
<dbReference type="GO" id="GO:1990904">
    <property type="term" value="C:ribonucleoprotein complex"/>
    <property type="evidence" value="ECO:0000250"/>
    <property type="project" value="UniProtKB"/>
</dbReference>
<dbReference type="GO" id="GO:0003735">
    <property type="term" value="F:structural constituent of ribosome"/>
    <property type="evidence" value="ECO:0000250"/>
    <property type="project" value="UniProtKB"/>
</dbReference>
<dbReference type="GO" id="GO:0006412">
    <property type="term" value="P:translation"/>
    <property type="evidence" value="ECO:0000250"/>
    <property type="project" value="UniProtKB"/>
</dbReference>
<dbReference type="InterPro" id="IPR019189">
    <property type="entry name" value="Ribosomal_mL41"/>
</dbReference>
<dbReference type="PANTHER" id="PTHR21338:SF0">
    <property type="entry name" value="LARGE RIBOSOMAL SUBUNIT PROTEIN ML41"/>
    <property type="match status" value="1"/>
</dbReference>
<dbReference type="PANTHER" id="PTHR21338">
    <property type="entry name" value="MITOCHONDRIAL RIBOSOMAL PROTEIN L41"/>
    <property type="match status" value="1"/>
</dbReference>
<dbReference type="Pfam" id="PF09809">
    <property type="entry name" value="MRP-L27"/>
    <property type="match status" value="1"/>
</dbReference>
<protein>
    <recommendedName>
        <fullName evidence="2">Large ribosomal subunit protein mL41</fullName>
    </recommendedName>
    <alternativeName>
        <fullName>39S ribosomal protein L41, mitochondrial</fullName>
        <shortName>L41mt</shortName>
        <shortName>MRP-L41</shortName>
    </alternativeName>
</protein>
<accession>Q291A0</accession>
<organism>
    <name type="scientific">Drosophila pseudoobscura pseudoobscura</name>
    <name type="common">Fruit fly</name>
    <dbReference type="NCBI Taxonomy" id="46245"/>
    <lineage>
        <taxon>Eukaryota</taxon>
        <taxon>Metazoa</taxon>
        <taxon>Ecdysozoa</taxon>
        <taxon>Arthropoda</taxon>
        <taxon>Hexapoda</taxon>
        <taxon>Insecta</taxon>
        <taxon>Pterygota</taxon>
        <taxon>Neoptera</taxon>
        <taxon>Endopterygota</taxon>
        <taxon>Diptera</taxon>
        <taxon>Brachycera</taxon>
        <taxon>Muscomorpha</taxon>
        <taxon>Ephydroidea</taxon>
        <taxon>Drosophilidae</taxon>
        <taxon>Drosophila</taxon>
        <taxon>Sophophora</taxon>
    </lineage>
</organism>
<gene>
    <name type="primary">mRpL41</name>
    <name type="ORF">GA11937</name>
</gene>
<reference key="1">
    <citation type="journal article" date="2005" name="Genome Res.">
        <title>Comparative genome sequencing of Drosophila pseudoobscura: chromosomal, gene, and cis-element evolution.</title>
        <authorList>
            <person name="Richards S."/>
            <person name="Liu Y."/>
            <person name="Bettencourt B.R."/>
            <person name="Hradecky P."/>
            <person name="Letovsky S."/>
            <person name="Nielsen R."/>
            <person name="Thornton K."/>
            <person name="Hubisz M.J."/>
            <person name="Chen R."/>
            <person name="Meisel R.P."/>
            <person name="Couronne O."/>
            <person name="Hua S."/>
            <person name="Smith M.A."/>
            <person name="Zhang P."/>
            <person name="Liu J."/>
            <person name="Bussemaker H.J."/>
            <person name="van Batenburg M.F."/>
            <person name="Howells S.L."/>
            <person name="Scherer S.E."/>
            <person name="Sodergren E."/>
            <person name="Matthews B.B."/>
            <person name="Crosby M.A."/>
            <person name="Schroeder A.J."/>
            <person name="Ortiz-Barrientos D."/>
            <person name="Rives C.M."/>
            <person name="Metzker M.L."/>
            <person name="Muzny D.M."/>
            <person name="Scott G."/>
            <person name="Steffen D."/>
            <person name="Wheeler D.A."/>
            <person name="Worley K.C."/>
            <person name="Havlak P."/>
            <person name="Durbin K.J."/>
            <person name="Egan A."/>
            <person name="Gill R."/>
            <person name="Hume J."/>
            <person name="Morgan M.B."/>
            <person name="Miner G."/>
            <person name="Hamilton C."/>
            <person name="Huang Y."/>
            <person name="Waldron L."/>
            <person name="Verduzco D."/>
            <person name="Clerc-Blankenburg K.P."/>
            <person name="Dubchak I."/>
            <person name="Noor M.A.F."/>
            <person name="Anderson W."/>
            <person name="White K.P."/>
            <person name="Clark A.G."/>
            <person name="Schaeffer S.W."/>
            <person name="Gelbart W.M."/>
            <person name="Weinstock G.M."/>
            <person name="Gibbs R.A."/>
        </authorList>
    </citation>
    <scope>NUCLEOTIDE SEQUENCE [LARGE SCALE GENOMIC DNA]</scope>
    <source>
        <strain>MV2-25 / Tucson 14011-0121.94</strain>
    </source>
</reference>
<sequence>MQNCIKLVPLALKCPQRAISTSAVLDGKRNFRKFNVHSKRGTRVVKEAQKTMANPPVPIDKRGVRDTGILVDGKFVEIPEKIPDIIVPDLTDCKLKPYVSYKAPEVVQSEFTSLDLFNAVYSKKIVEDFKAGSLQADGSPKEPSAEEKLTSSEAFLRARRTGSDIF</sequence>
<evidence type="ECO:0000250" key="1">
    <source>
        <dbReference type="UniProtKB" id="Q8IXM3"/>
    </source>
</evidence>
<evidence type="ECO:0000305" key="2"/>